<proteinExistence type="inferred from homology"/>
<evidence type="ECO:0000255" key="1">
    <source>
        <dbReference type="HAMAP-Rule" id="MF_02075"/>
    </source>
</evidence>
<gene>
    <name evidence="1" type="primary">aspS</name>
    <name type="ordered locus">Mbar_A3173</name>
</gene>
<sequence length="444" mass="50796">MSLAKLRTHYTADVKPEKVDNGQKITLAGWVHEVRDLGGICFVVLRDREGKAQVTLVKKKIDKELFDAARRLVRESVISVTGSVKFEEKAPNGYELLPEEITVLNVANSPLPMDTTGKVEAELDTRLDSRFIDLRRAETTAVFKIRHQALQATREYFVQNGFIETATPKVVATATEGGTALFPITYFDREAFLNQSPQLFKQILMSGGFDRVFEIGPIFRAEEHDTRRHLNEATSIDVEVSFADHFDVMEILENLVAYVYAQVIEKCKPSLETLGIELKVPKTPFLKLTYNEVIEIINARSEEKMHWGDDLGTFGEHIVGNYVYETTGESHYFIIDWPTEIKPFYAMPYEDRPEYSKSFDMMHRTMELSSGAQRIHIPDLLKSRIESQGLNPEGFEFYLKAFEYGMPPHAGWGMGCERFIMTMLGTENIRDTVLFPRDRRRLSP</sequence>
<keyword id="KW-0030">Aminoacyl-tRNA synthetase</keyword>
<keyword id="KW-0067">ATP-binding</keyword>
<keyword id="KW-0963">Cytoplasm</keyword>
<keyword id="KW-0436">Ligase</keyword>
<keyword id="KW-0460">Magnesium</keyword>
<keyword id="KW-0479">Metal-binding</keyword>
<keyword id="KW-0547">Nucleotide-binding</keyword>
<keyword id="KW-0648">Protein biosynthesis</keyword>
<accession>Q466Y5</accession>
<dbReference type="EC" id="6.1.1.23" evidence="1"/>
<dbReference type="EMBL" id="CP000099">
    <property type="protein sequence ID" value="AAZ72057.1"/>
    <property type="molecule type" value="Genomic_DNA"/>
</dbReference>
<dbReference type="SMR" id="Q466Y5"/>
<dbReference type="STRING" id="269797.Mbar_A3173"/>
<dbReference type="PaxDb" id="269797-Mbar_A3173"/>
<dbReference type="KEGG" id="mba:Mbar_A3173"/>
<dbReference type="eggNOG" id="arCOG00406">
    <property type="taxonomic scope" value="Archaea"/>
</dbReference>
<dbReference type="HOGENOM" id="CLU_004553_2_1_2"/>
<dbReference type="OrthoDB" id="5908at2157"/>
<dbReference type="GO" id="GO:0017101">
    <property type="term" value="C:aminoacyl-tRNA synthetase multienzyme complex"/>
    <property type="evidence" value="ECO:0007669"/>
    <property type="project" value="TreeGrafter"/>
</dbReference>
<dbReference type="GO" id="GO:0005829">
    <property type="term" value="C:cytosol"/>
    <property type="evidence" value="ECO:0007669"/>
    <property type="project" value="TreeGrafter"/>
</dbReference>
<dbReference type="GO" id="GO:0004815">
    <property type="term" value="F:aspartate-tRNA ligase activity"/>
    <property type="evidence" value="ECO:0007669"/>
    <property type="project" value="UniProtKB-UniRule"/>
</dbReference>
<dbReference type="GO" id="GO:0050560">
    <property type="term" value="F:aspartate-tRNA(Asn) ligase activity"/>
    <property type="evidence" value="ECO:0007669"/>
    <property type="project" value="UniProtKB-EC"/>
</dbReference>
<dbReference type="GO" id="GO:0005524">
    <property type="term" value="F:ATP binding"/>
    <property type="evidence" value="ECO:0007669"/>
    <property type="project" value="UniProtKB-UniRule"/>
</dbReference>
<dbReference type="GO" id="GO:0000287">
    <property type="term" value="F:magnesium ion binding"/>
    <property type="evidence" value="ECO:0007669"/>
    <property type="project" value="UniProtKB-UniRule"/>
</dbReference>
<dbReference type="GO" id="GO:0003723">
    <property type="term" value="F:RNA binding"/>
    <property type="evidence" value="ECO:0007669"/>
    <property type="project" value="TreeGrafter"/>
</dbReference>
<dbReference type="GO" id="GO:0006422">
    <property type="term" value="P:aspartyl-tRNA aminoacylation"/>
    <property type="evidence" value="ECO:0007669"/>
    <property type="project" value="UniProtKB-UniRule"/>
</dbReference>
<dbReference type="CDD" id="cd00776">
    <property type="entry name" value="AsxRS_core"/>
    <property type="match status" value="1"/>
</dbReference>
<dbReference type="CDD" id="cd04316">
    <property type="entry name" value="ND_PkAspRS_like_N"/>
    <property type="match status" value="1"/>
</dbReference>
<dbReference type="FunFam" id="3.30.930.10:FF:000038">
    <property type="entry name" value="Aspartate--tRNA ligase"/>
    <property type="match status" value="1"/>
</dbReference>
<dbReference type="FunFam" id="2.40.50.140:FF:000324">
    <property type="entry name" value="Aspartate--tRNA(Asp/Asn) ligase"/>
    <property type="match status" value="1"/>
</dbReference>
<dbReference type="Gene3D" id="3.30.930.10">
    <property type="entry name" value="Bira Bifunctional Protein, Domain 2"/>
    <property type="match status" value="1"/>
</dbReference>
<dbReference type="Gene3D" id="2.40.50.140">
    <property type="entry name" value="Nucleic acid-binding proteins"/>
    <property type="match status" value="1"/>
</dbReference>
<dbReference type="HAMAP" id="MF_02075">
    <property type="entry name" value="Asp_tRNA_synth_type2"/>
    <property type="match status" value="1"/>
</dbReference>
<dbReference type="InterPro" id="IPR004364">
    <property type="entry name" value="Aa-tRNA-synt_II"/>
</dbReference>
<dbReference type="InterPro" id="IPR006195">
    <property type="entry name" value="aa-tRNA-synth_II"/>
</dbReference>
<dbReference type="InterPro" id="IPR045864">
    <property type="entry name" value="aa-tRNA-synth_II/BPL/LPL"/>
</dbReference>
<dbReference type="InterPro" id="IPR004523">
    <property type="entry name" value="Asp-tRNA_synthase_2"/>
</dbReference>
<dbReference type="InterPro" id="IPR002312">
    <property type="entry name" value="Asp/Asn-tRNA-synth_IIb"/>
</dbReference>
<dbReference type="InterPro" id="IPR012340">
    <property type="entry name" value="NA-bd_OB-fold"/>
</dbReference>
<dbReference type="InterPro" id="IPR004365">
    <property type="entry name" value="NA-bd_OB_tRNA"/>
</dbReference>
<dbReference type="NCBIfam" id="TIGR00458">
    <property type="entry name" value="aspS_nondisc"/>
    <property type="match status" value="1"/>
</dbReference>
<dbReference type="NCBIfam" id="NF003483">
    <property type="entry name" value="PRK05159.1"/>
    <property type="match status" value="1"/>
</dbReference>
<dbReference type="PANTHER" id="PTHR43450:SF1">
    <property type="entry name" value="ASPARTATE--TRNA LIGASE, CYTOPLASMIC"/>
    <property type="match status" value="1"/>
</dbReference>
<dbReference type="PANTHER" id="PTHR43450">
    <property type="entry name" value="ASPARTYL-TRNA SYNTHETASE"/>
    <property type="match status" value="1"/>
</dbReference>
<dbReference type="Pfam" id="PF00152">
    <property type="entry name" value="tRNA-synt_2"/>
    <property type="match status" value="1"/>
</dbReference>
<dbReference type="Pfam" id="PF01336">
    <property type="entry name" value="tRNA_anti-codon"/>
    <property type="match status" value="1"/>
</dbReference>
<dbReference type="PRINTS" id="PR01042">
    <property type="entry name" value="TRNASYNTHASP"/>
</dbReference>
<dbReference type="SUPFAM" id="SSF55681">
    <property type="entry name" value="Class II aaRS and biotin synthetases"/>
    <property type="match status" value="1"/>
</dbReference>
<dbReference type="SUPFAM" id="SSF50249">
    <property type="entry name" value="Nucleic acid-binding proteins"/>
    <property type="match status" value="1"/>
</dbReference>
<dbReference type="PROSITE" id="PS50862">
    <property type="entry name" value="AA_TRNA_LIGASE_II"/>
    <property type="match status" value="1"/>
</dbReference>
<name>SYDND_METBF</name>
<feature type="chain" id="PRO_0000235583" description="Aspartate--tRNA(Asp/Asn) ligase">
    <location>
        <begin position="1"/>
        <end position="444"/>
    </location>
</feature>
<feature type="region of interest" description="Aspartate" evidence="1">
    <location>
        <begin position="198"/>
        <end position="201"/>
    </location>
</feature>
<feature type="binding site" evidence="1">
    <location>
        <position position="176"/>
    </location>
    <ligand>
        <name>L-aspartate</name>
        <dbReference type="ChEBI" id="CHEBI:29991"/>
    </ligand>
</feature>
<feature type="binding site" evidence="1">
    <location>
        <begin position="220"/>
        <end position="222"/>
    </location>
    <ligand>
        <name>ATP</name>
        <dbReference type="ChEBI" id="CHEBI:30616"/>
    </ligand>
</feature>
<feature type="binding site" evidence="1">
    <location>
        <position position="220"/>
    </location>
    <ligand>
        <name>L-aspartate</name>
        <dbReference type="ChEBI" id="CHEBI:29991"/>
    </ligand>
</feature>
<feature type="binding site" evidence="1">
    <location>
        <begin position="228"/>
        <end position="230"/>
    </location>
    <ligand>
        <name>ATP</name>
        <dbReference type="ChEBI" id="CHEBI:30616"/>
    </ligand>
</feature>
<feature type="binding site" evidence="1">
    <location>
        <position position="367"/>
    </location>
    <ligand>
        <name>ATP</name>
        <dbReference type="ChEBI" id="CHEBI:30616"/>
    </ligand>
</feature>
<feature type="binding site" evidence="1">
    <location>
        <position position="367"/>
    </location>
    <ligand>
        <name>Mg(2+)</name>
        <dbReference type="ChEBI" id="CHEBI:18420"/>
        <label>2</label>
    </ligand>
</feature>
<feature type="binding site" evidence="1">
    <location>
        <position position="367"/>
    </location>
    <ligand>
        <name>Mg(2+)</name>
        <dbReference type="ChEBI" id="CHEBI:18420"/>
        <label>3</label>
    </ligand>
</feature>
<feature type="binding site" evidence="1">
    <location>
        <position position="370"/>
    </location>
    <ligand>
        <name>L-aspartate</name>
        <dbReference type="ChEBI" id="CHEBI:29991"/>
    </ligand>
</feature>
<feature type="binding site" evidence="1">
    <location>
        <position position="370"/>
    </location>
    <ligand>
        <name>Mg(2+)</name>
        <dbReference type="ChEBI" id="CHEBI:18420"/>
        <label>2</label>
    </ligand>
</feature>
<feature type="binding site" evidence="1">
    <location>
        <position position="374"/>
    </location>
    <ligand>
        <name>L-aspartate</name>
        <dbReference type="ChEBI" id="CHEBI:29991"/>
    </ligand>
</feature>
<feature type="binding site" evidence="1">
    <location>
        <begin position="415"/>
        <end position="418"/>
    </location>
    <ligand>
        <name>ATP</name>
        <dbReference type="ChEBI" id="CHEBI:30616"/>
    </ligand>
</feature>
<feature type="site" description="Important for tRNA non-discrimination" evidence="1">
    <location>
        <position position="91"/>
    </location>
</feature>
<reference key="1">
    <citation type="journal article" date="2006" name="J. Bacteriol.">
        <title>The Methanosarcina barkeri genome: comparative analysis with Methanosarcina acetivorans and Methanosarcina mazei reveals extensive rearrangement within methanosarcinal genomes.</title>
        <authorList>
            <person name="Maeder D.L."/>
            <person name="Anderson I."/>
            <person name="Brettin T.S."/>
            <person name="Bruce D.C."/>
            <person name="Gilna P."/>
            <person name="Han C.S."/>
            <person name="Lapidus A."/>
            <person name="Metcalf W.W."/>
            <person name="Saunders E."/>
            <person name="Tapia R."/>
            <person name="Sowers K.R."/>
        </authorList>
    </citation>
    <scope>NUCLEOTIDE SEQUENCE [LARGE SCALE GENOMIC DNA]</scope>
    <source>
        <strain>Fusaro / DSM 804</strain>
    </source>
</reference>
<organism>
    <name type="scientific">Methanosarcina barkeri (strain Fusaro / DSM 804)</name>
    <dbReference type="NCBI Taxonomy" id="269797"/>
    <lineage>
        <taxon>Archaea</taxon>
        <taxon>Methanobacteriati</taxon>
        <taxon>Methanobacteriota</taxon>
        <taxon>Stenosarchaea group</taxon>
        <taxon>Methanomicrobia</taxon>
        <taxon>Methanosarcinales</taxon>
        <taxon>Methanosarcinaceae</taxon>
        <taxon>Methanosarcina</taxon>
    </lineage>
</organism>
<comment type="function">
    <text evidence="1">Aspartyl-tRNA synthetase with relaxed tRNA specificity since it is able to aspartylate not only its cognate tRNA(Asp) but also tRNA(Asn). Reaction proceeds in two steps: L-aspartate is first activated by ATP to form Asp-AMP and then transferred to the acceptor end of tRNA(Asp/Asn).</text>
</comment>
<comment type="catalytic activity">
    <reaction evidence="1">
        <text>tRNA(Asx) + L-aspartate + ATP = L-aspartyl-tRNA(Asx) + AMP + diphosphate</text>
        <dbReference type="Rhea" id="RHEA:18349"/>
        <dbReference type="Rhea" id="RHEA-COMP:9710"/>
        <dbReference type="Rhea" id="RHEA-COMP:9711"/>
        <dbReference type="ChEBI" id="CHEBI:29991"/>
        <dbReference type="ChEBI" id="CHEBI:30616"/>
        <dbReference type="ChEBI" id="CHEBI:33019"/>
        <dbReference type="ChEBI" id="CHEBI:78442"/>
        <dbReference type="ChEBI" id="CHEBI:78516"/>
        <dbReference type="ChEBI" id="CHEBI:456215"/>
        <dbReference type="EC" id="6.1.1.23"/>
    </reaction>
</comment>
<comment type="cofactor">
    <cofactor evidence="1">
        <name>Mg(2+)</name>
        <dbReference type="ChEBI" id="CHEBI:18420"/>
    </cofactor>
    <text evidence="1">Binds 3 Mg(2+) cations per subunit. The strongest magnesium site (Mg1) is bound to the beta- and gamma-phosphates of ATP and four water molecules complete its coordination sphere.</text>
</comment>
<comment type="subunit">
    <text evidence="1">Homodimer.</text>
</comment>
<comment type="subcellular location">
    <subcellularLocation>
        <location evidence="1">Cytoplasm</location>
    </subcellularLocation>
</comment>
<comment type="similarity">
    <text evidence="1">Belongs to the class-II aminoacyl-tRNA synthetase family. Type 2 subfamily.</text>
</comment>
<protein>
    <recommendedName>
        <fullName evidence="1">Aspartate--tRNA(Asp/Asn) ligase</fullName>
        <ecNumber evidence="1">6.1.1.23</ecNumber>
    </recommendedName>
    <alternativeName>
        <fullName evidence="1">Aspartyl-tRNA synthetase</fullName>
        <shortName evidence="1">AspRS</shortName>
    </alternativeName>
    <alternativeName>
        <fullName evidence="1">Non-discriminating aspartyl-tRNA synthetase</fullName>
        <shortName evidence="1">ND-AspRS</shortName>
    </alternativeName>
</protein>